<sequence>MTLAPADLPVSLQPLVDRALARLAQVLTEPIPADLLPLLTRLAVASDFALDTLVRQPALLAQLAAPGCPPIPAPVLDPLQPSDWPAQLRRWRAAMSTRLIWRDLAGLDDVAQTLAGATTLAEDCLRLALEALQQEFAQRHGVIADDQGTPQQLVVFGLGKLGGGELNFSSDIDLVYAYPHGGESDGPRALAAEEYFARLGQRLAKLLDETTVDGFSHRVDLRLRPFGSAGRVALSFAAMDQYFQREGRDWERYAWLKARAVAGDIAAGEAWLQTLRPFVYRRYLDFTALDGLREMKAAITAEVARRELHEDIKRGAGGIREIEFLCQALQLIRGGREPALRERRLLVALDALVAAGQIAPEDGSALREAYLFLRRLENRLQMLRDAQTHVLPSDALDRERIAVGLGYADWNVLRAALAEQQQRVSTEFAALLAPRKGQAAPDALANYWRSLPEGSNAPLLAEAGFLDANGADQSLRDFAQGTGVKSLSDAARARLDRVLPALLHAATRSPQPDAALKRVLGLLQAVLRRTSYLALLDEQPSALARLVDVLARSALLAERLAAYPLLLDELLDVRVSGPMPDAAGMLAECQQVLAVEDPESALRWLNETRLALSFRMAMATLDGRQGAVDSTRQLAELAQAVVVTVLAMAEADMHAAHGGIPGGRFAIIGYGSLGGLELGFGSDLDLVFLHDNPAGVDASDGARPLEPGRWYARLAQKVMALLGAVTAAGRLYDIDVRLRPDGGKGSLVSSLASYTEYQRERAWTWEHQALVRARGVAGDASLLADFEQVRAQTLGRERDTGVLYADVLKMRGRMRTELDRSDAARLDLKQGAGGVVDLEFLLQTGVLARSAQHAALLQPRDTPSLIDALAVAGFLPDATAQALHGAHATLLDVGLACTLDRRPRLAPTTPAIEEACAAITAACRAAELPFA</sequence>
<name>GLNE_STRMK</name>
<evidence type="ECO:0000255" key="1">
    <source>
        <dbReference type="HAMAP-Rule" id="MF_00802"/>
    </source>
</evidence>
<comment type="function">
    <text evidence="1">Involved in the regulation of glutamine synthetase GlnA, a key enzyme in the process to assimilate ammonia. When cellular nitrogen levels are high, the C-terminal adenylyl transferase (AT) inactivates GlnA by covalent transfer of an adenylyl group from ATP to specific tyrosine residue of GlnA, thus reducing its activity. Conversely, when nitrogen levels are low, the N-terminal adenylyl removase (AR) activates GlnA by removing the adenylyl group by phosphorolysis, increasing its activity. The regulatory region of GlnE binds the signal transduction protein PII (GlnB) which indicates the nitrogen status of the cell.</text>
</comment>
<comment type="catalytic activity">
    <reaction evidence="1">
        <text>[glutamine synthetase]-O(4)-(5'-adenylyl)-L-tyrosine + phosphate = [glutamine synthetase]-L-tyrosine + ADP</text>
        <dbReference type="Rhea" id="RHEA:43716"/>
        <dbReference type="Rhea" id="RHEA-COMP:10660"/>
        <dbReference type="Rhea" id="RHEA-COMP:10661"/>
        <dbReference type="ChEBI" id="CHEBI:43474"/>
        <dbReference type="ChEBI" id="CHEBI:46858"/>
        <dbReference type="ChEBI" id="CHEBI:83624"/>
        <dbReference type="ChEBI" id="CHEBI:456216"/>
        <dbReference type="EC" id="2.7.7.89"/>
    </reaction>
</comment>
<comment type="catalytic activity">
    <reaction evidence="1">
        <text>[glutamine synthetase]-L-tyrosine + ATP = [glutamine synthetase]-O(4)-(5'-adenylyl)-L-tyrosine + diphosphate</text>
        <dbReference type="Rhea" id="RHEA:18589"/>
        <dbReference type="Rhea" id="RHEA-COMP:10660"/>
        <dbReference type="Rhea" id="RHEA-COMP:10661"/>
        <dbReference type="ChEBI" id="CHEBI:30616"/>
        <dbReference type="ChEBI" id="CHEBI:33019"/>
        <dbReference type="ChEBI" id="CHEBI:46858"/>
        <dbReference type="ChEBI" id="CHEBI:83624"/>
        <dbReference type="EC" id="2.7.7.42"/>
    </reaction>
</comment>
<comment type="cofactor">
    <cofactor evidence="1">
        <name>Mg(2+)</name>
        <dbReference type="ChEBI" id="CHEBI:18420"/>
    </cofactor>
</comment>
<comment type="similarity">
    <text evidence="1">Belongs to the GlnE family.</text>
</comment>
<accession>B2FKU9</accession>
<proteinExistence type="inferred from homology"/>
<dbReference type="EC" id="2.7.7.89" evidence="1"/>
<dbReference type="EC" id="2.7.7.42" evidence="1"/>
<dbReference type="EMBL" id="AM743169">
    <property type="protein sequence ID" value="CAQ44068.1"/>
    <property type="molecule type" value="Genomic_DNA"/>
</dbReference>
<dbReference type="RefSeq" id="WP_012478961.1">
    <property type="nucleotide sequence ID" value="NC_010943.1"/>
</dbReference>
<dbReference type="SMR" id="B2FKU9"/>
<dbReference type="EnsemblBacteria" id="CAQ44068">
    <property type="protein sequence ID" value="CAQ44068"/>
    <property type="gene ID" value="Smlt0473"/>
</dbReference>
<dbReference type="KEGG" id="sml:Smlt0473"/>
<dbReference type="eggNOG" id="COG1391">
    <property type="taxonomic scope" value="Bacteria"/>
</dbReference>
<dbReference type="HOGENOM" id="CLU_006233_0_1_6"/>
<dbReference type="Proteomes" id="UP000008840">
    <property type="component" value="Chromosome"/>
</dbReference>
<dbReference type="GO" id="GO:0005829">
    <property type="term" value="C:cytosol"/>
    <property type="evidence" value="ECO:0007669"/>
    <property type="project" value="TreeGrafter"/>
</dbReference>
<dbReference type="GO" id="GO:0008882">
    <property type="term" value="F:[glutamate-ammonia-ligase] adenylyltransferase activity"/>
    <property type="evidence" value="ECO:0007669"/>
    <property type="project" value="UniProtKB-UniRule"/>
</dbReference>
<dbReference type="GO" id="GO:0047388">
    <property type="term" value="F:[glutamine synthetase]-adenylyl-L-tyrosine phosphorylase activity"/>
    <property type="evidence" value="ECO:0007669"/>
    <property type="project" value="UniProtKB-EC"/>
</dbReference>
<dbReference type="GO" id="GO:0005524">
    <property type="term" value="F:ATP binding"/>
    <property type="evidence" value="ECO:0007669"/>
    <property type="project" value="UniProtKB-UniRule"/>
</dbReference>
<dbReference type="GO" id="GO:0000287">
    <property type="term" value="F:magnesium ion binding"/>
    <property type="evidence" value="ECO:0007669"/>
    <property type="project" value="UniProtKB-UniRule"/>
</dbReference>
<dbReference type="GO" id="GO:0000820">
    <property type="term" value="P:regulation of glutamine family amino acid metabolic process"/>
    <property type="evidence" value="ECO:0007669"/>
    <property type="project" value="UniProtKB-UniRule"/>
</dbReference>
<dbReference type="CDD" id="cd05401">
    <property type="entry name" value="NT_GlnE_GlnD_like"/>
    <property type="match status" value="2"/>
</dbReference>
<dbReference type="FunFam" id="1.20.120.330:FF:000005">
    <property type="entry name" value="Bifunctional glutamine synthetase adenylyltransferase/adenylyl-removing enzyme"/>
    <property type="match status" value="1"/>
</dbReference>
<dbReference type="FunFam" id="3.30.460.10:FF:000009">
    <property type="entry name" value="Bifunctional glutamine synthetase adenylyltransferase/adenylyl-removing enzyme"/>
    <property type="match status" value="1"/>
</dbReference>
<dbReference type="Gene3D" id="1.20.120.1510">
    <property type="match status" value="1"/>
</dbReference>
<dbReference type="Gene3D" id="3.30.460.10">
    <property type="entry name" value="Beta Polymerase, domain 2"/>
    <property type="match status" value="2"/>
</dbReference>
<dbReference type="Gene3D" id="1.20.120.330">
    <property type="entry name" value="Nucleotidyltransferases domain 2"/>
    <property type="match status" value="2"/>
</dbReference>
<dbReference type="HAMAP" id="MF_00802">
    <property type="entry name" value="GlnE"/>
    <property type="match status" value="1"/>
</dbReference>
<dbReference type="InterPro" id="IPR023057">
    <property type="entry name" value="GlnE"/>
</dbReference>
<dbReference type="InterPro" id="IPR005190">
    <property type="entry name" value="GlnE_rpt_dom"/>
</dbReference>
<dbReference type="InterPro" id="IPR043519">
    <property type="entry name" value="NT_sf"/>
</dbReference>
<dbReference type="InterPro" id="IPR013546">
    <property type="entry name" value="PII_UdlTrfase/GS_AdlTrfase"/>
</dbReference>
<dbReference type="NCBIfam" id="NF008292">
    <property type="entry name" value="PRK11072.1"/>
    <property type="match status" value="1"/>
</dbReference>
<dbReference type="PANTHER" id="PTHR30621:SF0">
    <property type="entry name" value="BIFUNCTIONAL GLUTAMINE SYNTHETASE ADENYLYLTRANSFERASE_ADENYLYL-REMOVING ENZYME"/>
    <property type="match status" value="1"/>
</dbReference>
<dbReference type="PANTHER" id="PTHR30621">
    <property type="entry name" value="GLUTAMINE SYNTHETASE ADENYLYLTRANSFERASE"/>
    <property type="match status" value="1"/>
</dbReference>
<dbReference type="Pfam" id="PF08335">
    <property type="entry name" value="GlnD_UR_UTase"/>
    <property type="match status" value="2"/>
</dbReference>
<dbReference type="Pfam" id="PF03710">
    <property type="entry name" value="GlnE"/>
    <property type="match status" value="2"/>
</dbReference>
<dbReference type="SUPFAM" id="SSF81301">
    <property type="entry name" value="Nucleotidyltransferase"/>
    <property type="match status" value="2"/>
</dbReference>
<dbReference type="SUPFAM" id="SSF81593">
    <property type="entry name" value="Nucleotidyltransferase substrate binding subunit/domain"/>
    <property type="match status" value="2"/>
</dbReference>
<organism>
    <name type="scientific">Stenotrophomonas maltophilia (strain K279a)</name>
    <dbReference type="NCBI Taxonomy" id="522373"/>
    <lineage>
        <taxon>Bacteria</taxon>
        <taxon>Pseudomonadati</taxon>
        <taxon>Pseudomonadota</taxon>
        <taxon>Gammaproteobacteria</taxon>
        <taxon>Lysobacterales</taxon>
        <taxon>Lysobacteraceae</taxon>
        <taxon>Stenotrophomonas</taxon>
        <taxon>Stenotrophomonas maltophilia group</taxon>
    </lineage>
</organism>
<reference key="1">
    <citation type="journal article" date="2008" name="Genome Biol.">
        <title>The complete genome, comparative and functional analysis of Stenotrophomonas maltophilia reveals an organism heavily shielded by drug resistance determinants.</title>
        <authorList>
            <person name="Crossman L.C."/>
            <person name="Gould V.C."/>
            <person name="Dow J.M."/>
            <person name="Vernikos G.S."/>
            <person name="Okazaki A."/>
            <person name="Sebaihia M."/>
            <person name="Saunders D."/>
            <person name="Arrowsmith C."/>
            <person name="Carver T."/>
            <person name="Peters N."/>
            <person name="Adlem E."/>
            <person name="Kerhornou A."/>
            <person name="Lord A."/>
            <person name="Murphy L."/>
            <person name="Seeger K."/>
            <person name="Squares R."/>
            <person name="Rutter S."/>
            <person name="Quail M.A."/>
            <person name="Rajandream M.A."/>
            <person name="Harris D."/>
            <person name="Churcher C."/>
            <person name="Bentley S.D."/>
            <person name="Parkhill J."/>
            <person name="Thomson N.R."/>
            <person name="Avison M.B."/>
        </authorList>
    </citation>
    <scope>NUCLEOTIDE SEQUENCE [LARGE SCALE GENOMIC DNA]</scope>
    <source>
        <strain>K279a</strain>
    </source>
</reference>
<feature type="chain" id="PRO_1000133925" description="Bifunctional glutamine synthetase adenylyltransferase/adenylyl-removing enzyme">
    <location>
        <begin position="1"/>
        <end position="931"/>
    </location>
</feature>
<feature type="region of interest" description="Adenylyl removase" evidence="1">
    <location>
        <begin position="1"/>
        <end position="434"/>
    </location>
</feature>
<feature type="region of interest" description="Adenylyl transferase" evidence="1">
    <location>
        <begin position="441"/>
        <end position="931"/>
    </location>
</feature>
<keyword id="KW-0067">ATP-binding</keyword>
<keyword id="KW-0460">Magnesium</keyword>
<keyword id="KW-0511">Multifunctional enzyme</keyword>
<keyword id="KW-0547">Nucleotide-binding</keyword>
<keyword id="KW-0548">Nucleotidyltransferase</keyword>
<keyword id="KW-1185">Reference proteome</keyword>
<keyword id="KW-0808">Transferase</keyword>
<protein>
    <recommendedName>
        <fullName evidence="1">Bifunctional glutamine synthetase adenylyltransferase/adenylyl-removing enzyme</fullName>
    </recommendedName>
    <alternativeName>
        <fullName evidence="1">ATP:glutamine synthetase adenylyltransferase</fullName>
    </alternativeName>
    <alternativeName>
        <fullName evidence="1">ATase</fullName>
    </alternativeName>
    <domain>
        <recommendedName>
            <fullName evidence="1">Glutamine synthetase adenylyl-L-tyrosine phosphorylase</fullName>
            <ecNumber evidence="1">2.7.7.89</ecNumber>
        </recommendedName>
        <alternativeName>
            <fullName evidence="1">Adenylyl removase</fullName>
            <shortName evidence="1">AR</shortName>
            <shortName evidence="1">AT-N</shortName>
        </alternativeName>
    </domain>
    <domain>
        <recommendedName>
            <fullName evidence="1">Glutamine synthetase adenylyl transferase</fullName>
            <ecNumber evidence="1">2.7.7.42</ecNumber>
        </recommendedName>
        <alternativeName>
            <fullName evidence="1">Adenylyl transferase</fullName>
            <shortName evidence="1">AT</shortName>
            <shortName evidence="1">AT-C</shortName>
        </alternativeName>
    </domain>
</protein>
<gene>
    <name evidence="1" type="primary">glnE</name>
    <name type="ordered locus">Smlt0473</name>
</gene>